<keyword id="KW-0687">Ribonucleoprotein</keyword>
<keyword id="KW-0689">Ribosomal protein</keyword>
<protein>
    <recommendedName>
        <fullName evidence="2">Large ribosomal subunit protein bL27</fullName>
    </recommendedName>
    <alternativeName>
        <fullName evidence="4">50S ribosomal protein L27</fullName>
    </alternativeName>
</protein>
<feature type="propeptide" id="PRO_0000459904" evidence="1">
    <location>
        <begin position="1"/>
        <end position="8"/>
    </location>
</feature>
<feature type="chain" id="PRO_1000128765" description="Large ribosomal subunit protein bL27">
    <location>
        <begin position="9"/>
        <end position="93"/>
    </location>
</feature>
<feature type="region of interest" description="Disordered" evidence="3">
    <location>
        <begin position="8"/>
        <end position="29"/>
    </location>
</feature>
<name>RL27_LIMRJ</name>
<gene>
    <name evidence="2" type="primary">rpmA</name>
    <name type="ordered locus">LAR_1122</name>
</gene>
<organism>
    <name type="scientific">Limosilactobacillus reuteri subsp. reuteri (strain JCM 1112)</name>
    <name type="common">Lactobacillus reuteri</name>
    <dbReference type="NCBI Taxonomy" id="557433"/>
    <lineage>
        <taxon>Bacteria</taxon>
        <taxon>Bacillati</taxon>
        <taxon>Bacillota</taxon>
        <taxon>Bacilli</taxon>
        <taxon>Lactobacillales</taxon>
        <taxon>Lactobacillaceae</taxon>
        <taxon>Limosilactobacillus</taxon>
    </lineage>
</organism>
<comment type="PTM">
    <text evidence="1">The N-terminus is cleaved by ribosomal processing cysteine protease Prp.</text>
</comment>
<comment type="similarity">
    <text evidence="2">Belongs to the bacterial ribosomal protein bL27 family.</text>
</comment>
<accession>B2G856</accession>
<dbReference type="EMBL" id="AP007281">
    <property type="protein sequence ID" value="BAG25638.1"/>
    <property type="molecule type" value="Genomic_DNA"/>
</dbReference>
<dbReference type="RefSeq" id="WP_003664006.1">
    <property type="nucleotide sequence ID" value="NC_010609.1"/>
</dbReference>
<dbReference type="SMR" id="B2G856"/>
<dbReference type="KEGG" id="lrf:LAR_1122"/>
<dbReference type="HOGENOM" id="CLU_095424_4_0_9"/>
<dbReference type="GO" id="GO:0022625">
    <property type="term" value="C:cytosolic large ribosomal subunit"/>
    <property type="evidence" value="ECO:0007669"/>
    <property type="project" value="TreeGrafter"/>
</dbReference>
<dbReference type="GO" id="GO:0003735">
    <property type="term" value="F:structural constituent of ribosome"/>
    <property type="evidence" value="ECO:0007669"/>
    <property type="project" value="InterPro"/>
</dbReference>
<dbReference type="GO" id="GO:0006412">
    <property type="term" value="P:translation"/>
    <property type="evidence" value="ECO:0007669"/>
    <property type="project" value="UniProtKB-UniRule"/>
</dbReference>
<dbReference type="FunFam" id="2.40.50.100:FF:000004">
    <property type="entry name" value="50S ribosomal protein L27"/>
    <property type="match status" value="1"/>
</dbReference>
<dbReference type="Gene3D" id="2.40.50.100">
    <property type="match status" value="1"/>
</dbReference>
<dbReference type="HAMAP" id="MF_00539">
    <property type="entry name" value="Ribosomal_bL27"/>
    <property type="match status" value="1"/>
</dbReference>
<dbReference type="InterPro" id="IPR001684">
    <property type="entry name" value="Ribosomal_bL27"/>
</dbReference>
<dbReference type="InterPro" id="IPR018261">
    <property type="entry name" value="Ribosomal_bL27_CS"/>
</dbReference>
<dbReference type="NCBIfam" id="TIGR00062">
    <property type="entry name" value="L27"/>
    <property type="match status" value="1"/>
</dbReference>
<dbReference type="PANTHER" id="PTHR15893:SF0">
    <property type="entry name" value="LARGE RIBOSOMAL SUBUNIT PROTEIN BL27M"/>
    <property type="match status" value="1"/>
</dbReference>
<dbReference type="PANTHER" id="PTHR15893">
    <property type="entry name" value="RIBOSOMAL PROTEIN L27"/>
    <property type="match status" value="1"/>
</dbReference>
<dbReference type="Pfam" id="PF01016">
    <property type="entry name" value="Ribosomal_L27"/>
    <property type="match status" value="1"/>
</dbReference>
<dbReference type="PRINTS" id="PR00063">
    <property type="entry name" value="RIBOSOMALL27"/>
</dbReference>
<dbReference type="SUPFAM" id="SSF110324">
    <property type="entry name" value="Ribosomal L27 protein-like"/>
    <property type="match status" value="1"/>
</dbReference>
<dbReference type="PROSITE" id="PS00831">
    <property type="entry name" value="RIBOSOMAL_L27"/>
    <property type="match status" value="1"/>
</dbReference>
<evidence type="ECO:0000250" key="1">
    <source>
        <dbReference type="UniProtKB" id="Q2FXT0"/>
    </source>
</evidence>
<evidence type="ECO:0000255" key="2">
    <source>
        <dbReference type="HAMAP-Rule" id="MF_00539"/>
    </source>
</evidence>
<evidence type="ECO:0000256" key="3">
    <source>
        <dbReference type="SAM" id="MobiDB-lite"/>
    </source>
</evidence>
<evidence type="ECO:0000305" key="4"/>
<reference key="1">
    <citation type="journal article" date="2008" name="DNA Res.">
        <title>Comparative genome analysis of Lactobacillus reuteri and Lactobacillus fermentum reveal a genomic island for reuterin and cobalamin production.</title>
        <authorList>
            <person name="Morita H."/>
            <person name="Toh H."/>
            <person name="Fukuda S."/>
            <person name="Horikawa H."/>
            <person name="Oshima K."/>
            <person name="Suzuki T."/>
            <person name="Murakami M."/>
            <person name="Hisamatsu S."/>
            <person name="Kato Y."/>
            <person name="Takizawa T."/>
            <person name="Fukuoka H."/>
            <person name="Yoshimura T."/>
            <person name="Itoh K."/>
            <person name="O'Sullivan D.J."/>
            <person name="McKay L.L."/>
            <person name="Ohno H."/>
            <person name="Kikuchi J."/>
            <person name="Masaoka T."/>
            <person name="Hattori M."/>
        </authorList>
    </citation>
    <scope>NUCLEOTIDE SEQUENCE [LARGE SCALE GENOMIC DNA]</scope>
    <source>
        <strain>JCM 1112</strain>
    </source>
</reference>
<proteinExistence type="inferred from homology"/>
<sequence>MIMDLQFFSHHKGGGSTANGRNSAGRRLGTKAADGSIVTAGSIIYRQRGTHINPGENVGRGGDDTLYAKVAGVVKFERMGRSKRKVSVYPVAE</sequence>